<dbReference type="EC" id="2.3.1.74"/>
<dbReference type="EMBL" id="AF292367">
    <property type="protein sequence ID" value="AAK15174.1"/>
    <property type="molecule type" value="Genomic_DNA"/>
</dbReference>
<dbReference type="EMBL" id="EU862821">
    <property type="protein sequence ID" value="ACF72868.1"/>
    <property type="molecule type" value="Genomic_DNA"/>
</dbReference>
<dbReference type="SMR" id="Q9AU11"/>
<dbReference type="BioCyc" id="MetaCyc:MONOMER-15027"/>
<dbReference type="BRENDA" id="2.3.1.212">
    <property type="organism ID" value="5472"/>
</dbReference>
<dbReference type="BRENDA" id="2.3.1.74">
    <property type="organism ID" value="5472"/>
</dbReference>
<dbReference type="UniPathway" id="UPA00154"/>
<dbReference type="GO" id="GO:0016210">
    <property type="term" value="F:naringenin-chalcone synthase activity"/>
    <property type="evidence" value="ECO:0007669"/>
    <property type="project" value="UniProtKB-EC"/>
</dbReference>
<dbReference type="GO" id="GO:0042803">
    <property type="term" value="F:protein homodimerization activity"/>
    <property type="evidence" value="ECO:0000250"/>
    <property type="project" value="UniProtKB"/>
</dbReference>
<dbReference type="GO" id="GO:0009813">
    <property type="term" value="P:flavonoid biosynthetic process"/>
    <property type="evidence" value="ECO:0007669"/>
    <property type="project" value="UniProtKB-UniPathway"/>
</dbReference>
<dbReference type="GO" id="GO:0030639">
    <property type="term" value="P:polyketide biosynthetic process"/>
    <property type="evidence" value="ECO:0007669"/>
    <property type="project" value="TreeGrafter"/>
</dbReference>
<dbReference type="CDD" id="cd00831">
    <property type="entry name" value="CHS_like"/>
    <property type="match status" value="1"/>
</dbReference>
<dbReference type="FunFam" id="3.40.47.10:FF:000014">
    <property type="entry name" value="Chalcone synthase 1"/>
    <property type="match status" value="1"/>
</dbReference>
<dbReference type="FunFam" id="3.40.47.10:FF:000025">
    <property type="entry name" value="Chalcone synthase 2"/>
    <property type="match status" value="1"/>
</dbReference>
<dbReference type="Gene3D" id="3.40.47.10">
    <property type="match status" value="2"/>
</dbReference>
<dbReference type="InterPro" id="IPR012328">
    <property type="entry name" value="Chalcone/stilbene_synt_C"/>
</dbReference>
<dbReference type="InterPro" id="IPR001099">
    <property type="entry name" value="Chalcone/stilbene_synt_N"/>
</dbReference>
<dbReference type="InterPro" id="IPR018088">
    <property type="entry name" value="Chalcone/stilbene_synthase_AS"/>
</dbReference>
<dbReference type="InterPro" id="IPR011141">
    <property type="entry name" value="Polyketide_synthase_type-III"/>
</dbReference>
<dbReference type="InterPro" id="IPR016039">
    <property type="entry name" value="Thiolase-like"/>
</dbReference>
<dbReference type="PANTHER" id="PTHR11877:SF80">
    <property type="entry name" value="CHALCONE SYNTHASE 1"/>
    <property type="match status" value="1"/>
</dbReference>
<dbReference type="PANTHER" id="PTHR11877">
    <property type="entry name" value="HYDROXYMETHYLGLUTARYL-COA SYNTHASE"/>
    <property type="match status" value="1"/>
</dbReference>
<dbReference type="Pfam" id="PF02797">
    <property type="entry name" value="Chal_sti_synt_C"/>
    <property type="match status" value="1"/>
</dbReference>
<dbReference type="Pfam" id="PF00195">
    <property type="entry name" value="Chal_sti_synt_N"/>
    <property type="match status" value="1"/>
</dbReference>
<dbReference type="PIRSF" id="PIRSF000451">
    <property type="entry name" value="PKS_III"/>
    <property type="match status" value="1"/>
</dbReference>
<dbReference type="SUPFAM" id="SSF53901">
    <property type="entry name" value="Thiolase-like"/>
    <property type="match status" value="2"/>
</dbReference>
<dbReference type="PROSITE" id="PS00441">
    <property type="entry name" value="CHALCONE_SYNTH"/>
    <property type="match status" value="1"/>
</dbReference>
<reference key="1">
    <citation type="journal article" date="2001" name="Plant Mol. Biol.">
        <title>Molecular and biochemical characterization of three aromatic polyketide synthase genes from Rubus idaeus.</title>
        <authorList>
            <person name="Zheng D."/>
            <person name="Schroder G."/>
            <person name="Schroder J."/>
            <person name="Hrazdina G."/>
        </authorList>
    </citation>
    <scope>NUCLEOTIDE SEQUENCE [GENOMIC DNA]</scope>
    <scope>FUNCTION</scope>
    <scope>CATALYTIC ACTIVITY</scope>
    <scope>MUTAGENESIS OF ARG-259 AND PHE-344</scope>
    <source>
        <strain>cv. Royalty</strain>
    </source>
</reference>
<reference key="2">
    <citation type="journal article" date="2009" name="Mol. Nutr. Food Res.">
        <title>Environmental and seasonal influences on red raspberry anthocyanin antioxidant contents and identification of quantitative traits loci (QTL).</title>
        <authorList>
            <person name="Kassim A."/>
            <person name="Poette J."/>
            <person name="Paterson A."/>
            <person name="Zait D."/>
            <person name="McCallum S."/>
            <person name="Woodhead M."/>
            <person name="Smith K."/>
            <person name="Hackett C."/>
            <person name="Graham J."/>
        </authorList>
    </citation>
    <scope>NUCLEOTIDE SEQUENCE [GENOMIC DNA]</scope>
    <source>
        <strain>cv. Glen Moy</strain>
    </source>
</reference>
<reference key="3">
    <citation type="journal article" date="2008" name="Arch. Biochem. Biophys.">
        <title>Molecular and biochemical characterization of benzalacetone synthase and chalcone synthase genes and their proteins from raspberry (Rubus idaeus L.).</title>
        <authorList>
            <person name="Zheng D."/>
            <person name="Hrazdina G."/>
        </authorList>
    </citation>
    <scope>TISSUE SPECIFICITY</scope>
    <scope>DEVELOPMENTAL STAGE</scope>
    <source>
        <strain>cv. Royalty</strain>
        <tissue>Leaf</tissue>
    </source>
</reference>
<comment type="function">
    <text evidence="3">Polyketide synthase producing naringenin chalcone and slightly p-coumaryltriacetic acid lactone (CTAL). Can use p-coumaryl-CoA as substrate.</text>
</comment>
<comment type="catalytic activity">
    <reaction evidence="2 3">
        <text>(E)-4-coumaroyl-CoA + 3 malonyl-CoA + 3 H(+) = 2',4,4',6'-tetrahydroxychalcone + 3 CO2 + 4 CoA</text>
        <dbReference type="Rhea" id="RHEA:11128"/>
        <dbReference type="ChEBI" id="CHEBI:15378"/>
        <dbReference type="ChEBI" id="CHEBI:15413"/>
        <dbReference type="ChEBI" id="CHEBI:16526"/>
        <dbReference type="ChEBI" id="CHEBI:57287"/>
        <dbReference type="ChEBI" id="CHEBI:57384"/>
        <dbReference type="ChEBI" id="CHEBI:85008"/>
        <dbReference type="EC" id="2.3.1.74"/>
    </reaction>
</comment>
<comment type="pathway">
    <text>Secondary metabolite biosynthesis; flavonoid biosynthesis.</text>
</comment>
<comment type="subunit">
    <text evidence="1">Homodimer.</text>
</comment>
<comment type="tissue specificity">
    <text evidence="4">Expressed in fruits.</text>
</comment>
<comment type="developmental stage">
    <text evidence="4">Accumulates in fruits when berries are small and hard green until complete ripening.</text>
</comment>
<comment type="similarity">
    <text evidence="5">Belongs to the thiolase-like superfamily. Chalcone/stilbene synthases family.</text>
</comment>
<accession>Q9AU11</accession>
<keyword id="KW-0012">Acyltransferase</keyword>
<keyword id="KW-0808">Transferase</keyword>
<feature type="chain" id="PRO_0000424286" description="Polyketide synthase 1">
    <location>
        <begin position="1"/>
        <end position="391"/>
    </location>
</feature>
<feature type="active site" evidence="2">
    <location>
        <position position="164"/>
    </location>
</feature>
<feature type="mutagenesis site" description="Loss of activity." evidence="3">
    <original>R</original>
    <variation>H</variation>
    <location>
        <position position="259"/>
    </location>
</feature>
<feature type="mutagenesis site" description="Loss of activity." evidence="3">
    <original>F</original>
    <variation>L</variation>
    <location>
        <position position="344"/>
    </location>
</feature>
<name>PKS1_RUBID</name>
<evidence type="ECO:0000250" key="1"/>
<evidence type="ECO:0000255" key="2">
    <source>
        <dbReference type="PROSITE-ProRule" id="PRU10023"/>
    </source>
</evidence>
<evidence type="ECO:0000269" key="3">
    <source>
    </source>
</evidence>
<evidence type="ECO:0000269" key="4">
    <source>
    </source>
</evidence>
<evidence type="ECO:0000305" key="5"/>
<proteinExistence type="evidence at protein level"/>
<sequence>MVTVDEVRKAQRAEGPATILAIGTATPPNCVDQSTYPDYYFRITKSEHKTELKEKFQRMCDKSMIKKRYMYLTEEILKENPSMCEYMAPSLDARQDMVVVEIPKLGKEAATKAIKEWGQPKSKITHLVFCTTSGVDMPGADYQLTKLLGLRPSVKRLMMYQQGCFAGGTVLRLAKDLAENNKGARVLVVCSEITAVTFRGPSDTHLDSLVGQALFGDGAAAIIVGSDPLPDIERPLFELVSAAQTILPDSDGAIDGHLREVGLTFHLLKDVPGLISKNIEKSLNEAFKPLDITDWNSLFWIAHPGGPAILDQVEAKLGLKPEKLEATRNILSEYGNMSSACVLFILDEVRRKSVANGHKTTGEGLEWGVLFGFGPGLTVETVVLHSVAAST</sequence>
<protein>
    <recommendedName>
        <fullName>Polyketide synthase 1</fullName>
        <shortName>RiPKS1</shortName>
        <ecNumber>2.3.1.74</ecNumber>
    </recommendedName>
    <alternativeName>
        <fullName>Naringenin-chalcone synthase PKS1</fullName>
    </alternativeName>
</protein>
<gene>
    <name type="primary">PKS1</name>
</gene>
<organism>
    <name type="scientific">Rubus idaeus</name>
    <name type="common">Raspberry</name>
    <dbReference type="NCBI Taxonomy" id="32247"/>
    <lineage>
        <taxon>Eukaryota</taxon>
        <taxon>Viridiplantae</taxon>
        <taxon>Streptophyta</taxon>
        <taxon>Embryophyta</taxon>
        <taxon>Tracheophyta</taxon>
        <taxon>Spermatophyta</taxon>
        <taxon>Magnoliopsida</taxon>
        <taxon>eudicotyledons</taxon>
        <taxon>Gunneridae</taxon>
        <taxon>Pentapetalae</taxon>
        <taxon>rosids</taxon>
        <taxon>fabids</taxon>
        <taxon>Rosales</taxon>
        <taxon>Rosaceae</taxon>
        <taxon>Rosoideae</taxon>
        <taxon>Rosoideae incertae sedis</taxon>
        <taxon>Rubus</taxon>
    </lineage>
</organism>